<comment type="function">
    <text evidence="3">Histone H1-like DNA-binding protein involved in the organization and segregation of kinetoplast DNA (kDNA). The mitochondrial DNA of kinetoplastid protozoa consists of about 5,000 minicircles and 20 to 30 maxicircles. These circular DNAs are held together by catenation into a highly organized compact disk structure referred to as a kinetoplast DNA (kDNA) network. Binds preferentially to a specific fragment of minicircle DNA and is able to compact kDNA networks through DNA charge neutralization and condensation.</text>
</comment>
<comment type="subunit">
    <text>Associates with the kinetoplast DNA network.</text>
</comment>
<comment type="subcellular location">
    <subcellularLocation>
        <location evidence="2 3">Mitochondrion matrix</location>
        <location evidence="2 3">Kinetoplast</location>
    </subcellularLocation>
</comment>
<comment type="similarity">
    <text evidence="4">Belongs to the KAP family.</text>
</comment>
<feature type="propeptide" id="PRO_0000409298">
    <location>
        <begin position="1"/>
        <end position="10"/>
    </location>
</feature>
<feature type="chain" id="PRO_0000409299" description="kinetoplast-associated protein 2-1">
    <location>
        <begin position="11"/>
        <end position="130"/>
    </location>
</feature>
<feature type="region of interest" description="Disordered" evidence="1">
    <location>
        <begin position="89"/>
        <end position="130"/>
    </location>
</feature>
<feature type="compositionally biased region" description="Basic and acidic residues" evidence="1">
    <location>
        <begin position="92"/>
        <end position="105"/>
    </location>
</feature>
<feature type="compositionally biased region" description="Basic residues" evidence="1">
    <location>
        <begin position="106"/>
        <end position="130"/>
    </location>
</feature>
<protein>
    <recommendedName>
        <fullName>kinetoplast-associated protein 2-1</fullName>
    </recommendedName>
    <alternativeName>
        <fullName>Histone H1-like protein p18-1</fullName>
    </alternativeName>
</protein>
<keyword id="KW-0903">Direct protein sequencing</keyword>
<keyword id="KW-0238">DNA-binding</keyword>
<keyword id="KW-0419">Kinetoplast</keyword>
<keyword id="KW-0496">Mitochondrion</keyword>
<dbReference type="EMBL" id="AF008944">
    <property type="protein sequence ID" value="AAC47741.1"/>
    <property type="molecule type" value="Genomic_DNA"/>
</dbReference>
<dbReference type="PIR" id="JC6090">
    <property type="entry name" value="JC6090"/>
</dbReference>
<dbReference type="SMR" id="Q9TY83"/>
<dbReference type="VEuPathDB" id="TriTrypDB:CFAC1_300049900"/>
<dbReference type="GO" id="GO:0020023">
    <property type="term" value="C:kinetoplast"/>
    <property type="evidence" value="ECO:0000314"/>
    <property type="project" value="UniProtKB"/>
</dbReference>
<dbReference type="GO" id="GO:0003677">
    <property type="term" value="F:DNA binding"/>
    <property type="evidence" value="ECO:0000314"/>
    <property type="project" value="UniProtKB"/>
</dbReference>
<dbReference type="Gene3D" id="1.10.30.10">
    <property type="entry name" value="High mobility group box domain"/>
    <property type="match status" value="1"/>
</dbReference>
<dbReference type="InterPro" id="IPR009071">
    <property type="entry name" value="HMG_box_dom"/>
</dbReference>
<dbReference type="InterPro" id="IPR036910">
    <property type="entry name" value="HMG_box_dom_sf"/>
</dbReference>
<dbReference type="InterPro" id="IPR052695">
    <property type="entry name" value="Kinetoplast-DNA-binding"/>
</dbReference>
<dbReference type="PANTHER" id="PTHR37564:SF4">
    <property type="entry name" value="DNA-ASSOCIATED PROTEIN, PUTATIVE-RELATED"/>
    <property type="match status" value="1"/>
</dbReference>
<dbReference type="PANTHER" id="PTHR37564">
    <property type="entry name" value="KINETOPLAST DNA-ASSOCIATED PROTEIN"/>
    <property type="match status" value="1"/>
</dbReference>
<dbReference type="SMART" id="SM00398">
    <property type="entry name" value="HMG"/>
    <property type="match status" value="1"/>
</dbReference>
<dbReference type="SUPFAM" id="SSF47095">
    <property type="entry name" value="HMG-box"/>
    <property type="match status" value="1"/>
</dbReference>
<sequence length="130" mass="14857">MLRRTVSNFAMSPYMLFISDLAKTGKLKGIRTPGKFVGKKYRQLSAKEKAALQQRAKQASTPAMTAYRRMAHREMSNKSVPIEQRRANLTKKWNETKQAQREKAQKAQKKTKSAKSKVKKAAKKSKKSKK</sequence>
<evidence type="ECO:0000256" key="1">
    <source>
        <dbReference type="SAM" id="MobiDB-lite"/>
    </source>
</evidence>
<evidence type="ECO:0000269" key="2">
    <source>
    </source>
</evidence>
<evidence type="ECO:0000269" key="3">
    <source>
    </source>
</evidence>
<evidence type="ECO:0000305" key="4"/>
<gene>
    <name type="primary">KAP2-1</name>
</gene>
<proteinExistence type="evidence at protein level"/>
<reference key="1">
    <citation type="journal article" date="1996" name="Mol. Cell. Biol.">
        <title>Nucleus-encoded histone H1-like proteins are associated with kinetoplast DNA in the trypanosomatid Crithidia fasciculata.</title>
        <authorList>
            <person name="Xu C.W."/>
            <person name="Hines J.C."/>
            <person name="Engel M.L."/>
            <person name="Russell D.G."/>
            <person name="Ray D.S."/>
        </authorList>
    </citation>
    <scope>NUCLEOTIDE SEQUENCE [MRNA]</scope>
    <scope>DNA-BINDING</scope>
    <scope>FUNCTION</scope>
    <scope>SUBCELLULAR LOCATION</scope>
</reference>
<reference key="2">
    <citation type="journal article" date="1997" name="Mol. Biochem. Parasitol.">
        <title>Tandem arrangement of two genes encoding kinetoplast-associated H1 histone-like proteins.</title>
        <authorList>
            <person name="Hines J.C."/>
            <person name="Ray D.S."/>
        </authorList>
    </citation>
    <scope>NUCLEOTIDE SEQUENCE [GENOMIC DNA]</scope>
</reference>
<reference key="3">
    <citation type="journal article" date="1993" name="Proc. Natl. Acad. Sci. U.S.A.">
        <title>Isolation of proteins associated with kinetoplast DNA networks in vivo.</title>
        <authorList>
            <person name="Xu C."/>
            <person name="Ray D.S."/>
        </authorList>
    </citation>
    <scope>NUCLEOTIDE SEQUENCE [MRNA] OF 1-17</scope>
    <scope>PROTEIN SEQUENCE OF 10-24</scope>
    <scope>DNA-BINDING</scope>
    <scope>SUBCELLULAR LOCATION</scope>
</reference>
<accession>Q9TY83</accession>
<name>KAP21_CRIFA</name>
<organism>
    <name type="scientific">Crithidia fasciculata</name>
    <dbReference type="NCBI Taxonomy" id="5656"/>
    <lineage>
        <taxon>Eukaryota</taxon>
        <taxon>Discoba</taxon>
        <taxon>Euglenozoa</taxon>
        <taxon>Kinetoplastea</taxon>
        <taxon>Metakinetoplastina</taxon>
        <taxon>Trypanosomatida</taxon>
        <taxon>Trypanosomatidae</taxon>
        <taxon>Leishmaniinae</taxon>
        <taxon>Crithidia</taxon>
    </lineage>
</organism>